<keyword id="KW-0007">Acetylation</keyword>
<keyword id="KW-0012">Acyltransferase</keyword>
<keyword id="KW-0965">Cell junction</keyword>
<keyword id="KW-0966">Cell projection</keyword>
<keyword id="KW-0168">Coated pit</keyword>
<keyword id="KW-0963">Cytoplasm</keyword>
<keyword id="KW-0206">Cytoskeleton</keyword>
<keyword id="KW-0472">Membrane</keyword>
<keyword id="KW-0488">Methylation</keyword>
<keyword id="KW-0597">Phosphoprotein</keyword>
<keyword id="KW-1185">Reference proteome</keyword>
<keyword id="KW-0808">Transferase</keyword>
<organism>
    <name type="scientific">Sus scrofa</name>
    <name type="common">Pig</name>
    <dbReference type="NCBI Taxonomy" id="9823"/>
    <lineage>
        <taxon>Eukaryota</taxon>
        <taxon>Metazoa</taxon>
        <taxon>Chordata</taxon>
        <taxon>Craniata</taxon>
        <taxon>Vertebrata</taxon>
        <taxon>Euteleostomi</taxon>
        <taxon>Mammalia</taxon>
        <taxon>Eutheria</taxon>
        <taxon>Laurasiatheria</taxon>
        <taxon>Artiodactyla</taxon>
        <taxon>Suina</taxon>
        <taxon>Suidae</taxon>
        <taxon>Sus</taxon>
    </lineage>
</organism>
<evidence type="ECO:0000250" key="1">
    <source>
        <dbReference type="UniProtKB" id="Q5SQI0"/>
    </source>
</evidence>
<evidence type="ECO:0000250" key="2">
    <source>
        <dbReference type="UniProtKB" id="Q6MG11"/>
    </source>
</evidence>
<evidence type="ECO:0000250" key="3">
    <source>
        <dbReference type="UniProtKB" id="Q8K341"/>
    </source>
</evidence>
<evidence type="ECO:0000255" key="4">
    <source>
        <dbReference type="HAMAP-Rule" id="MF_03130"/>
    </source>
</evidence>
<evidence type="ECO:0000256" key="5">
    <source>
        <dbReference type="SAM" id="MobiDB-lite"/>
    </source>
</evidence>
<dbReference type="EC" id="2.3.1.108" evidence="4"/>
<dbReference type="EMBL" id="AB113356">
    <property type="protein sequence ID" value="BAD08430.1"/>
    <property type="molecule type" value="Genomic_DNA"/>
</dbReference>
<dbReference type="EMBL" id="AB113357">
    <property type="protein sequence ID" value="BAD08442.1"/>
    <property type="molecule type" value="Genomic_DNA"/>
</dbReference>
<dbReference type="RefSeq" id="NP_001116595.1">
    <property type="nucleotide sequence ID" value="NM_001123123.1"/>
</dbReference>
<dbReference type="SMR" id="Q767K7"/>
<dbReference type="FunCoup" id="Q767K7">
    <property type="interactions" value="9"/>
</dbReference>
<dbReference type="STRING" id="9823.ENSSSCP00000020536"/>
<dbReference type="PaxDb" id="9823-ENSSSCP00000030388"/>
<dbReference type="PeptideAtlas" id="Q767K7"/>
<dbReference type="GeneID" id="100144480"/>
<dbReference type="KEGG" id="ssc:100144480"/>
<dbReference type="CTD" id="79969"/>
<dbReference type="eggNOG" id="KOG4601">
    <property type="taxonomic scope" value="Eukaryota"/>
</dbReference>
<dbReference type="InParanoid" id="Q767K7"/>
<dbReference type="OrthoDB" id="447510at2759"/>
<dbReference type="Proteomes" id="UP000008227">
    <property type="component" value="Unplaced"/>
</dbReference>
<dbReference type="Proteomes" id="UP000314985">
    <property type="component" value="Unplaced"/>
</dbReference>
<dbReference type="Proteomes" id="UP000694570">
    <property type="component" value="Unplaced"/>
</dbReference>
<dbReference type="Proteomes" id="UP000694571">
    <property type="component" value="Unplaced"/>
</dbReference>
<dbReference type="Proteomes" id="UP000694720">
    <property type="component" value="Unplaced"/>
</dbReference>
<dbReference type="Proteomes" id="UP000694722">
    <property type="component" value="Unplaced"/>
</dbReference>
<dbReference type="Proteomes" id="UP000694723">
    <property type="component" value="Unplaced"/>
</dbReference>
<dbReference type="Proteomes" id="UP000694724">
    <property type="component" value="Unplaced"/>
</dbReference>
<dbReference type="Proteomes" id="UP000694725">
    <property type="component" value="Unplaced"/>
</dbReference>
<dbReference type="Proteomes" id="UP000694726">
    <property type="component" value="Unplaced"/>
</dbReference>
<dbReference type="Proteomes" id="UP000694727">
    <property type="component" value="Unplaced"/>
</dbReference>
<dbReference type="Proteomes" id="UP000694728">
    <property type="component" value="Unplaced"/>
</dbReference>
<dbReference type="GO" id="GO:0030424">
    <property type="term" value="C:axon"/>
    <property type="evidence" value="ECO:0007669"/>
    <property type="project" value="UniProtKB-SubCell"/>
</dbReference>
<dbReference type="GO" id="GO:0005905">
    <property type="term" value="C:clathrin-coated pit"/>
    <property type="evidence" value="ECO:0007669"/>
    <property type="project" value="UniProtKB-SubCell"/>
</dbReference>
<dbReference type="GO" id="GO:0005737">
    <property type="term" value="C:cytoplasm"/>
    <property type="evidence" value="ECO:0007669"/>
    <property type="project" value="UniProtKB-SubCell"/>
</dbReference>
<dbReference type="GO" id="GO:0005925">
    <property type="term" value="C:focal adhesion"/>
    <property type="evidence" value="ECO:0007669"/>
    <property type="project" value="UniProtKB-SubCell"/>
</dbReference>
<dbReference type="GO" id="GO:0005874">
    <property type="term" value="C:microtubule"/>
    <property type="evidence" value="ECO:0007669"/>
    <property type="project" value="InterPro"/>
</dbReference>
<dbReference type="GO" id="GO:0005819">
    <property type="term" value="C:spindle"/>
    <property type="evidence" value="ECO:0007669"/>
    <property type="project" value="UniProtKB-SubCell"/>
</dbReference>
<dbReference type="GO" id="GO:0004468">
    <property type="term" value="F:L-lysine N-acetyltransferase activity, acting on acetyl phosphate as donor"/>
    <property type="evidence" value="ECO:0000250"/>
    <property type="project" value="UniProtKB"/>
</dbReference>
<dbReference type="GO" id="GO:0019799">
    <property type="term" value="F:tubulin N-acetyltransferase activity"/>
    <property type="evidence" value="ECO:0000250"/>
    <property type="project" value="UniProtKB"/>
</dbReference>
<dbReference type="GO" id="GO:0071929">
    <property type="term" value="P:alpha-tubulin acetylation"/>
    <property type="evidence" value="ECO:0000250"/>
    <property type="project" value="UniProtKB"/>
</dbReference>
<dbReference type="GO" id="GO:0000226">
    <property type="term" value="P:microtubule cytoskeleton organization"/>
    <property type="evidence" value="ECO:0000318"/>
    <property type="project" value="GO_Central"/>
</dbReference>
<dbReference type="GO" id="GO:0048666">
    <property type="term" value="P:neuron development"/>
    <property type="evidence" value="ECO:0007669"/>
    <property type="project" value="UniProtKB-UniRule"/>
</dbReference>
<dbReference type="GO" id="GO:0070507">
    <property type="term" value="P:regulation of microtubule cytoskeleton organization"/>
    <property type="evidence" value="ECO:0007669"/>
    <property type="project" value="UniProtKB-UniRule"/>
</dbReference>
<dbReference type="CDD" id="cd04301">
    <property type="entry name" value="NAT_SF"/>
    <property type="match status" value="1"/>
</dbReference>
<dbReference type="FunFam" id="3.40.630.30:FF:000060">
    <property type="entry name" value="Alpha-tubulin N-acetyltransferase 1"/>
    <property type="match status" value="1"/>
</dbReference>
<dbReference type="Gene3D" id="3.40.630.30">
    <property type="match status" value="1"/>
</dbReference>
<dbReference type="Gene3D" id="6.20.370.120">
    <property type="match status" value="1"/>
</dbReference>
<dbReference type="HAMAP" id="MF_03130">
    <property type="entry name" value="mec17"/>
    <property type="match status" value="1"/>
</dbReference>
<dbReference type="InterPro" id="IPR016181">
    <property type="entry name" value="Acyl_CoA_acyltransferase"/>
</dbReference>
<dbReference type="InterPro" id="IPR038746">
    <property type="entry name" value="Atat"/>
</dbReference>
<dbReference type="InterPro" id="IPR007965">
    <property type="entry name" value="GNAT_ATAT"/>
</dbReference>
<dbReference type="PANTHER" id="PTHR12327">
    <property type="entry name" value="ALPHA-TUBULIN N-ACETYLTRANSFERASE 1"/>
    <property type="match status" value="1"/>
</dbReference>
<dbReference type="PANTHER" id="PTHR12327:SF0">
    <property type="entry name" value="ALPHA-TUBULIN N-ACETYLTRANSFERASE 1"/>
    <property type="match status" value="1"/>
</dbReference>
<dbReference type="Pfam" id="PF05301">
    <property type="entry name" value="Acetyltransf_16"/>
    <property type="match status" value="1"/>
</dbReference>
<dbReference type="SUPFAM" id="SSF55729">
    <property type="entry name" value="Acyl-CoA N-acyltransferases (Nat)"/>
    <property type="match status" value="1"/>
</dbReference>
<dbReference type="PROSITE" id="PS51730">
    <property type="entry name" value="GNAT_ATAT"/>
    <property type="match status" value="1"/>
</dbReference>
<name>ATAT_PIG</name>
<feature type="chain" id="PRO_0000402066" description="Alpha-tubulin N-acetyltransferase 1">
    <location>
        <begin position="1"/>
        <end position="300"/>
    </location>
</feature>
<feature type="domain" description="N-acetyltransferase" evidence="4">
    <location>
        <begin position="1"/>
        <end position="190"/>
    </location>
</feature>
<feature type="region of interest" description="Disordered" evidence="5">
    <location>
        <begin position="229"/>
        <end position="263"/>
    </location>
</feature>
<feature type="region of interest" description="Disordered" evidence="5">
    <location>
        <begin position="280"/>
        <end position="300"/>
    </location>
</feature>
<feature type="binding site" evidence="4">
    <location>
        <begin position="124"/>
        <end position="137"/>
    </location>
    <ligand>
        <name>acetyl-CoA</name>
        <dbReference type="ChEBI" id="CHEBI:57288"/>
    </ligand>
</feature>
<feature type="binding site" evidence="4">
    <location>
        <begin position="160"/>
        <end position="169"/>
    </location>
    <ligand>
        <name>acetyl-CoA</name>
        <dbReference type="ChEBI" id="CHEBI:57288"/>
    </ligand>
</feature>
<feature type="site" description="Crucial for catalytic activity" evidence="4">
    <location>
        <position position="58"/>
    </location>
</feature>
<feature type="modified residue" description="N6-acetyllysine; by autocatalysis" evidence="3 4">
    <location>
        <position position="56"/>
    </location>
</feature>
<feature type="modified residue" description="N6-acetyllysine; by autocatalysis" evidence="3 4">
    <location>
        <position position="146"/>
    </location>
</feature>
<feature type="modified residue" description="N6-acetyllysine; by autocatalysis" evidence="3 4">
    <location>
        <position position="210"/>
    </location>
</feature>
<feature type="modified residue" description="N6-acetyllysine; by autocatalysis" evidence="3 4">
    <location>
        <position position="221"/>
    </location>
</feature>
<feature type="modified residue" description="Phosphoserine" evidence="2">
    <location>
        <position position="249"/>
    </location>
</feature>
<feature type="modified residue" description="Phosphoserine" evidence="1">
    <location>
        <position position="253"/>
    </location>
</feature>
<feature type="modified residue" description="Asymmetric dimethylarginine" evidence="3">
    <location>
        <position position="282"/>
    </location>
</feature>
<feature type="modified residue" description="Phosphoserine" evidence="1">
    <location>
        <position position="292"/>
    </location>
</feature>
<feature type="modified residue" description="Omega-N-methylarginine" evidence="1">
    <location>
        <position position="300"/>
    </location>
</feature>
<sequence>MEFPFDVDALFPERITVLDQHLRPPARRPGTTTPARVDLQQQIMTIIDELGKASAKAQHLPAPITSASRMQSNRHVMYILKDTSARPAGKGAIVGFLKVGYKKLFVLDDREAHNEVEPLCILDFYIHESLQRHGHGRELFQHMLQKERVEPHQLAIDRPSQKLLKFLNKHYNLETTVPQVNNFVIFEGFFAHQHPPARKLPPKRAEGDIKPYSSSDREFLKVAVEPPWPLNRAPRRATPPAHPPPRSSSLGNSPERGPLRPFVPEQELLRSLRLCPPHPTARLLLATDPGGSPAQRRRTR</sequence>
<accession>Q767K7</accession>
<comment type="function">
    <text evidence="4">Specifically acetylates 'Lys-40' in alpha-tubulin on the lumenal side of microtubules. Promotes microtubule destabilization and accelerates microtubule dynamics; this activity may be independent of acetylation activity. Acetylates alpha-tubulin with a slow enzymatic rate, due to a catalytic site that is not optimized for acetyl transfer. Enters the microtubule through each end and diffuses quickly throughout the lumen of microtubules. Acetylates only long/old microtubules because of its slow acetylation rate since it does not have time to act on dynamically unstable microtubules before the enzyme is released. Required for normal sperm flagellar function. Promotes directional cell locomotion and chemotaxis, through AP2A2-dependent acetylation of alpha-tubulin at clathrin-coated pits that are concentrated at the leading edge of migrating cells. May facilitate primary cilium assembly.</text>
</comment>
<comment type="catalytic activity">
    <reaction evidence="4">
        <text>L-lysyl-[alpha-tubulin] + acetyl-CoA = N(6)-acetyl-L-lysyl-[alpha-tubulin] + CoA + H(+)</text>
        <dbReference type="Rhea" id="RHEA:15277"/>
        <dbReference type="Rhea" id="RHEA-COMP:11278"/>
        <dbReference type="Rhea" id="RHEA-COMP:11279"/>
        <dbReference type="ChEBI" id="CHEBI:15378"/>
        <dbReference type="ChEBI" id="CHEBI:29969"/>
        <dbReference type="ChEBI" id="CHEBI:57287"/>
        <dbReference type="ChEBI" id="CHEBI:57288"/>
        <dbReference type="ChEBI" id="CHEBI:61930"/>
        <dbReference type="EC" id="2.3.1.108"/>
    </reaction>
</comment>
<comment type="subunit">
    <text evidence="4">Component of the BBSome complex. Interacts with AP2 alpha-adaptins, including AP2A2, but not with AP1 gamma-adaptin (AP1G1/AP1G2); this interaction is required for efficient alpha-tubulin acetylation, hence clathrin-coated pits are sites of microtubule acetylation.</text>
</comment>
<comment type="subcellular location">
    <subcellularLocation>
        <location evidence="4">Cytoplasm</location>
    </subcellularLocation>
    <subcellularLocation>
        <location evidence="4">Membrane</location>
        <location evidence="4">Clathrin-coated pit</location>
    </subcellularLocation>
    <subcellularLocation>
        <location evidence="4">Cell junction</location>
        <location evidence="4">Focal adhesion</location>
    </subcellularLocation>
    <subcellularLocation>
        <location evidence="4">Cell projection</location>
        <location evidence="4">Axon</location>
    </subcellularLocation>
    <subcellularLocation>
        <location evidence="4">Cytoplasm</location>
        <location evidence="4">Cytoskeleton</location>
    </subcellularLocation>
    <subcellularLocation>
        <location evidence="4">Cytoplasm</location>
        <location evidence="4">Cytoskeleton</location>
        <location evidence="4">Spindle</location>
    </subcellularLocation>
</comment>
<comment type="PTM">
    <text evidence="4">Autoacetylation strongly increases tubulin acetylation.</text>
</comment>
<comment type="similarity">
    <text evidence="4">Belongs to the acetyltransferase ATAT1 family.</text>
</comment>
<proteinExistence type="inferred from homology"/>
<reference key="1">
    <citation type="journal article" date="2004" name="Immunogenetics">
        <title>Nucleotide sequencing analysis of the swine 433-kb genomic segment located between the non-classical and classical SLA class I gene clusters.</title>
        <authorList>
            <person name="Shigenari A."/>
            <person name="Ando A."/>
            <person name="Renard C."/>
            <person name="Chardon P."/>
            <person name="Shiina T."/>
            <person name="Kulski J.K."/>
            <person name="Yasue H."/>
            <person name="Inoko H."/>
        </authorList>
    </citation>
    <scope>NUCLEOTIDE SEQUENCE [LARGE SCALE GENOMIC DNA]</scope>
    <source>
        <strain>Large white</strain>
    </source>
</reference>
<gene>
    <name evidence="4" type="primary">ATAT1</name>
    <name evidence="4" type="synonym">MEC17</name>
</gene>
<protein>
    <recommendedName>
        <fullName evidence="4">Alpha-tubulin N-acetyltransferase 1</fullName>
        <shortName evidence="4">Alpha-TAT</shortName>
        <shortName evidence="4">Alpha-TAT1</shortName>
        <shortName evidence="4">TAT</shortName>
        <ecNumber evidence="4">2.3.1.108</ecNumber>
    </recommendedName>
    <alternativeName>
        <fullName evidence="4">Acetyltransferase mec-17 homolog</fullName>
    </alternativeName>
</protein>